<dbReference type="EMBL" id="AC069252">
    <property type="protein sequence ID" value="AAF86548.1"/>
    <property type="molecule type" value="Genomic_DNA"/>
</dbReference>
<dbReference type="EMBL" id="CP002684">
    <property type="protein sequence ID" value="AEE30188.1"/>
    <property type="molecule type" value="Genomic_DNA"/>
</dbReference>
<dbReference type="EMBL" id="BT023422">
    <property type="protein sequence ID" value="AAY56413.1"/>
    <property type="molecule type" value="mRNA"/>
</dbReference>
<dbReference type="EMBL" id="BT025319">
    <property type="protein sequence ID" value="ABF57275.1"/>
    <property type="molecule type" value="mRNA"/>
</dbReference>
<dbReference type="RefSeq" id="NP_173623.1">
    <property type="nucleotide sequence ID" value="NM_102054.4"/>
</dbReference>
<dbReference type="SMR" id="Q9LM55"/>
<dbReference type="FunCoup" id="Q9LM55">
    <property type="interactions" value="1375"/>
</dbReference>
<dbReference type="PaxDb" id="3702-AT1G22040.1"/>
<dbReference type="ProteomicsDB" id="230680"/>
<dbReference type="EnsemblPlants" id="AT1G22040.1">
    <property type="protein sequence ID" value="AT1G22040.1"/>
    <property type="gene ID" value="AT1G22040"/>
</dbReference>
<dbReference type="GeneID" id="838809"/>
<dbReference type="Gramene" id="AT1G22040.1">
    <property type="protein sequence ID" value="AT1G22040.1"/>
    <property type="gene ID" value="AT1G22040"/>
</dbReference>
<dbReference type="KEGG" id="ath:AT1G22040"/>
<dbReference type="Araport" id="AT1G22040"/>
<dbReference type="TAIR" id="AT1G22040"/>
<dbReference type="eggNOG" id="KOG1072">
    <property type="taxonomic scope" value="Eukaryota"/>
</dbReference>
<dbReference type="HOGENOM" id="CLU_041852_0_0_1"/>
<dbReference type="InParanoid" id="Q9LM55"/>
<dbReference type="OMA" id="ACKRQRM"/>
<dbReference type="OrthoDB" id="45365at2759"/>
<dbReference type="PhylomeDB" id="Q9LM55"/>
<dbReference type="PRO" id="PR:Q9LM55"/>
<dbReference type="Proteomes" id="UP000006548">
    <property type="component" value="Chromosome 1"/>
</dbReference>
<dbReference type="ExpressionAtlas" id="Q9LM55">
    <property type="expression patterns" value="baseline and differential"/>
</dbReference>
<dbReference type="CDD" id="cd22152">
    <property type="entry name" value="F-box_AtAFR-like"/>
    <property type="match status" value="1"/>
</dbReference>
<dbReference type="Gene3D" id="1.20.1280.50">
    <property type="match status" value="1"/>
</dbReference>
<dbReference type="Gene3D" id="2.120.10.80">
    <property type="entry name" value="Kelch-type beta propeller"/>
    <property type="match status" value="1"/>
</dbReference>
<dbReference type="InterPro" id="IPR036047">
    <property type="entry name" value="F-box-like_dom_sf"/>
</dbReference>
<dbReference type="InterPro" id="IPR001810">
    <property type="entry name" value="F-box_dom"/>
</dbReference>
<dbReference type="InterPro" id="IPR015915">
    <property type="entry name" value="Kelch-typ_b-propeller"/>
</dbReference>
<dbReference type="InterPro" id="IPR006652">
    <property type="entry name" value="Kelch_1"/>
</dbReference>
<dbReference type="PANTHER" id="PTHR46344:SF27">
    <property type="entry name" value="KELCH REPEAT SUPERFAMILY PROTEIN"/>
    <property type="match status" value="1"/>
</dbReference>
<dbReference type="PANTHER" id="PTHR46344">
    <property type="entry name" value="OS02G0202900 PROTEIN"/>
    <property type="match status" value="1"/>
</dbReference>
<dbReference type="Pfam" id="PF00646">
    <property type="entry name" value="F-box"/>
    <property type="match status" value="1"/>
</dbReference>
<dbReference type="Pfam" id="PF25210">
    <property type="entry name" value="Kelch_FKB95"/>
    <property type="match status" value="1"/>
</dbReference>
<dbReference type="SMART" id="SM00256">
    <property type="entry name" value="FBOX"/>
    <property type="match status" value="1"/>
</dbReference>
<dbReference type="SMART" id="SM00612">
    <property type="entry name" value="Kelch"/>
    <property type="match status" value="2"/>
</dbReference>
<dbReference type="SUPFAM" id="SSF81383">
    <property type="entry name" value="F-box domain"/>
    <property type="match status" value="1"/>
</dbReference>
<dbReference type="SUPFAM" id="SSF117281">
    <property type="entry name" value="Kelch motif"/>
    <property type="match status" value="1"/>
</dbReference>
<dbReference type="PROSITE" id="PS50181">
    <property type="entry name" value="FBOX"/>
    <property type="match status" value="1"/>
</dbReference>
<feature type="chain" id="PRO_0000283174" description="F-box/kelch-repeat protein At1g22040">
    <location>
        <begin position="1"/>
        <end position="475"/>
    </location>
</feature>
<feature type="domain" description="F-box" evidence="1">
    <location>
        <begin position="41"/>
        <end position="87"/>
    </location>
</feature>
<feature type="repeat" description="Kelch 1">
    <location>
        <begin position="94"/>
        <end position="140"/>
    </location>
</feature>
<feature type="repeat" description="Kelch 2">
    <location>
        <begin position="182"/>
        <end position="228"/>
    </location>
</feature>
<feature type="repeat" description="Kelch 3">
    <location>
        <begin position="229"/>
        <end position="279"/>
    </location>
</feature>
<feature type="repeat" description="Kelch 4">
    <location>
        <begin position="306"/>
        <end position="350"/>
    </location>
</feature>
<feature type="repeat" description="Kelch 5">
    <location>
        <begin position="352"/>
        <end position="401"/>
    </location>
</feature>
<feature type="region of interest" description="Disordered" evidence="2">
    <location>
        <begin position="1"/>
        <end position="28"/>
    </location>
</feature>
<evidence type="ECO:0000255" key="1">
    <source>
        <dbReference type="PROSITE-ProRule" id="PRU00080"/>
    </source>
</evidence>
<evidence type="ECO:0000256" key="2">
    <source>
        <dbReference type="SAM" id="MobiDB-lite"/>
    </source>
</evidence>
<name>FBK8_ARATH</name>
<proteinExistence type="evidence at transcript level"/>
<protein>
    <recommendedName>
        <fullName>F-box/kelch-repeat protein At1g22040</fullName>
    </recommendedName>
</protein>
<gene>
    <name type="ordered locus">At1g22040</name>
    <name type="ORF">F2E2.11</name>
</gene>
<sequence>MGSVMSLSCSKRKATSQDVECSSESRKRRKISSENDEEECCRLIPSLPDELSIQILARLPRICYSSVRLVSRRWRSAVSTSEVYSLRKELGRTEEWLYVLTKGHEDKLLWYALDPVSTKWQRLPPMPVVVYEEESRKSLSGLWNMITPSFNVGAIVRSFLGRRDSSEQMPFCGCAIGAVDGGLYVIGGLSRSKTVSCVWRFDPILNSWSEVSSMLASRAYSKTGVLNKKLYVVGGVDRGRGGLSPLQSAEVYDPSTDAWSEVPSMPFSKAQVLPNAFLADLLKPIATGMTCYNGRLCVPQSLYSWPFFVDVGGEVYDPETNLWVEMPSGMGEGWPARQAGTKLSVVVDGELYAFDPSSSMENGKIKVYDQKEDTWKVVIGEVPVYDLTDSESPYLLAGFHGKLHFITRDPNHNVTVLRADVPNIPVSSSSSSSSSVSIPHLKTNAPNKSDTVTWKLIATKDFGAAELVSCQVIDI</sequence>
<accession>Q9LM55</accession>
<reference key="1">
    <citation type="journal article" date="2000" name="Nature">
        <title>Sequence and analysis of chromosome 1 of the plant Arabidopsis thaliana.</title>
        <authorList>
            <person name="Theologis A."/>
            <person name="Ecker J.R."/>
            <person name="Palm C.J."/>
            <person name="Federspiel N.A."/>
            <person name="Kaul S."/>
            <person name="White O."/>
            <person name="Alonso J."/>
            <person name="Altafi H."/>
            <person name="Araujo R."/>
            <person name="Bowman C.L."/>
            <person name="Brooks S.Y."/>
            <person name="Buehler E."/>
            <person name="Chan A."/>
            <person name="Chao Q."/>
            <person name="Chen H."/>
            <person name="Cheuk R.F."/>
            <person name="Chin C.W."/>
            <person name="Chung M.K."/>
            <person name="Conn L."/>
            <person name="Conway A.B."/>
            <person name="Conway A.R."/>
            <person name="Creasy T.H."/>
            <person name="Dewar K."/>
            <person name="Dunn P."/>
            <person name="Etgu P."/>
            <person name="Feldblyum T.V."/>
            <person name="Feng J.-D."/>
            <person name="Fong B."/>
            <person name="Fujii C.Y."/>
            <person name="Gill J.E."/>
            <person name="Goldsmith A.D."/>
            <person name="Haas B."/>
            <person name="Hansen N.F."/>
            <person name="Hughes B."/>
            <person name="Huizar L."/>
            <person name="Hunter J.L."/>
            <person name="Jenkins J."/>
            <person name="Johnson-Hopson C."/>
            <person name="Khan S."/>
            <person name="Khaykin E."/>
            <person name="Kim C.J."/>
            <person name="Koo H.L."/>
            <person name="Kremenetskaia I."/>
            <person name="Kurtz D.B."/>
            <person name="Kwan A."/>
            <person name="Lam B."/>
            <person name="Langin-Hooper S."/>
            <person name="Lee A."/>
            <person name="Lee J.M."/>
            <person name="Lenz C.A."/>
            <person name="Li J.H."/>
            <person name="Li Y.-P."/>
            <person name="Lin X."/>
            <person name="Liu S.X."/>
            <person name="Liu Z.A."/>
            <person name="Luros J.S."/>
            <person name="Maiti R."/>
            <person name="Marziali A."/>
            <person name="Militscher J."/>
            <person name="Miranda M."/>
            <person name="Nguyen M."/>
            <person name="Nierman W.C."/>
            <person name="Osborne B.I."/>
            <person name="Pai G."/>
            <person name="Peterson J."/>
            <person name="Pham P.K."/>
            <person name="Rizzo M."/>
            <person name="Rooney T."/>
            <person name="Rowley D."/>
            <person name="Sakano H."/>
            <person name="Salzberg S.L."/>
            <person name="Schwartz J.R."/>
            <person name="Shinn P."/>
            <person name="Southwick A.M."/>
            <person name="Sun H."/>
            <person name="Tallon L.J."/>
            <person name="Tambunga G."/>
            <person name="Toriumi M.J."/>
            <person name="Town C.D."/>
            <person name="Utterback T."/>
            <person name="Van Aken S."/>
            <person name="Vaysberg M."/>
            <person name="Vysotskaia V.S."/>
            <person name="Walker M."/>
            <person name="Wu D."/>
            <person name="Yu G."/>
            <person name="Fraser C.M."/>
            <person name="Venter J.C."/>
            <person name="Davis R.W."/>
        </authorList>
    </citation>
    <scope>NUCLEOTIDE SEQUENCE [LARGE SCALE GENOMIC DNA]</scope>
    <source>
        <strain>cv. Columbia</strain>
    </source>
</reference>
<reference key="2">
    <citation type="journal article" date="2017" name="Plant J.">
        <title>Araport11: a complete reannotation of the Arabidopsis thaliana reference genome.</title>
        <authorList>
            <person name="Cheng C.Y."/>
            <person name="Krishnakumar V."/>
            <person name="Chan A.P."/>
            <person name="Thibaud-Nissen F."/>
            <person name="Schobel S."/>
            <person name="Town C.D."/>
        </authorList>
    </citation>
    <scope>GENOME REANNOTATION</scope>
    <source>
        <strain>cv. Columbia</strain>
    </source>
</reference>
<reference key="3">
    <citation type="submission" date="2006-05" db="EMBL/GenBank/DDBJ databases">
        <title>Arabidopsis ORF clones.</title>
        <authorList>
            <person name="Shinn P."/>
            <person name="Chen H."/>
            <person name="Kim C.J."/>
            <person name="Quinitio C."/>
            <person name="Ecker J.R."/>
        </authorList>
    </citation>
    <scope>NUCLEOTIDE SEQUENCE [LARGE SCALE MRNA]</scope>
    <source>
        <strain>cv. Columbia</strain>
    </source>
</reference>
<organism>
    <name type="scientific">Arabidopsis thaliana</name>
    <name type="common">Mouse-ear cress</name>
    <dbReference type="NCBI Taxonomy" id="3702"/>
    <lineage>
        <taxon>Eukaryota</taxon>
        <taxon>Viridiplantae</taxon>
        <taxon>Streptophyta</taxon>
        <taxon>Embryophyta</taxon>
        <taxon>Tracheophyta</taxon>
        <taxon>Spermatophyta</taxon>
        <taxon>Magnoliopsida</taxon>
        <taxon>eudicotyledons</taxon>
        <taxon>Gunneridae</taxon>
        <taxon>Pentapetalae</taxon>
        <taxon>rosids</taxon>
        <taxon>malvids</taxon>
        <taxon>Brassicales</taxon>
        <taxon>Brassicaceae</taxon>
        <taxon>Camelineae</taxon>
        <taxon>Arabidopsis</taxon>
    </lineage>
</organism>
<keyword id="KW-0880">Kelch repeat</keyword>
<keyword id="KW-1185">Reference proteome</keyword>
<keyword id="KW-0677">Repeat</keyword>